<dbReference type="EC" id="2.4.99.17" evidence="1"/>
<dbReference type="EMBL" id="AE004439">
    <property type="protein sequence ID" value="AAK02316.1"/>
    <property type="molecule type" value="Genomic_DNA"/>
</dbReference>
<dbReference type="RefSeq" id="WP_010906536.1">
    <property type="nucleotide sequence ID" value="NC_002663.1"/>
</dbReference>
<dbReference type="SMR" id="P57832"/>
<dbReference type="STRING" id="272843.PM0232"/>
<dbReference type="EnsemblBacteria" id="AAK02316">
    <property type="protein sequence ID" value="AAK02316"/>
    <property type="gene ID" value="PM0232"/>
</dbReference>
<dbReference type="KEGG" id="pmu:PM0232"/>
<dbReference type="PATRIC" id="fig|272843.6.peg.240"/>
<dbReference type="HOGENOM" id="CLU_039110_1_0_6"/>
<dbReference type="OrthoDB" id="9805933at2"/>
<dbReference type="UniPathway" id="UPA00392"/>
<dbReference type="Proteomes" id="UP000000809">
    <property type="component" value="Chromosome"/>
</dbReference>
<dbReference type="GO" id="GO:0005737">
    <property type="term" value="C:cytoplasm"/>
    <property type="evidence" value="ECO:0007669"/>
    <property type="project" value="UniProtKB-SubCell"/>
</dbReference>
<dbReference type="GO" id="GO:0051075">
    <property type="term" value="F:S-adenosylmethionine:tRNA ribosyltransferase-isomerase activity"/>
    <property type="evidence" value="ECO:0007669"/>
    <property type="project" value="UniProtKB-EC"/>
</dbReference>
<dbReference type="GO" id="GO:0008616">
    <property type="term" value="P:queuosine biosynthetic process"/>
    <property type="evidence" value="ECO:0007669"/>
    <property type="project" value="UniProtKB-UniRule"/>
</dbReference>
<dbReference type="GO" id="GO:0002099">
    <property type="term" value="P:tRNA wobble guanine modification"/>
    <property type="evidence" value="ECO:0007669"/>
    <property type="project" value="TreeGrafter"/>
</dbReference>
<dbReference type="FunFam" id="2.40.10.240:FF:000001">
    <property type="entry name" value="S-adenosylmethionine:tRNA ribosyltransferase-isomerase"/>
    <property type="match status" value="1"/>
</dbReference>
<dbReference type="FunFam" id="3.40.1780.10:FF:000001">
    <property type="entry name" value="S-adenosylmethionine:tRNA ribosyltransferase-isomerase"/>
    <property type="match status" value="1"/>
</dbReference>
<dbReference type="Gene3D" id="2.40.10.240">
    <property type="entry name" value="QueA-like"/>
    <property type="match status" value="1"/>
</dbReference>
<dbReference type="Gene3D" id="3.40.1780.10">
    <property type="entry name" value="QueA-like"/>
    <property type="match status" value="1"/>
</dbReference>
<dbReference type="HAMAP" id="MF_00113">
    <property type="entry name" value="QueA"/>
    <property type="match status" value="1"/>
</dbReference>
<dbReference type="InterPro" id="IPR003699">
    <property type="entry name" value="QueA"/>
</dbReference>
<dbReference type="InterPro" id="IPR042118">
    <property type="entry name" value="QueA_dom1"/>
</dbReference>
<dbReference type="InterPro" id="IPR042119">
    <property type="entry name" value="QueA_dom2"/>
</dbReference>
<dbReference type="InterPro" id="IPR036100">
    <property type="entry name" value="QueA_sf"/>
</dbReference>
<dbReference type="NCBIfam" id="NF001140">
    <property type="entry name" value="PRK00147.1"/>
    <property type="match status" value="1"/>
</dbReference>
<dbReference type="NCBIfam" id="TIGR00113">
    <property type="entry name" value="queA"/>
    <property type="match status" value="1"/>
</dbReference>
<dbReference type="PANTHER" id="PTHR30307">
    <property type="entry name" value="S-ADENOSYLMETHIONINE:TRNA RIBOSYLTRANSFERASE-ISOMERASE"/>
    <property type="match status" value="1"/>
</dbReference>
<dbReference type="PANTHER" id="PTHR30307:SF0">
    <property type="entry name" value="S-ADENOSYLMETHIONINE:TRNA RIBOSYLTRANSFERASE-ISOMERASE"/>
    <property type="match status" value="1"/>
</dbReference>
<dbReference type="Pfam" id="PF02547">
    <property type="entry name" value="Queuosine_synth"/>
    <property type="match status" value="1"/>
</dbReference>
<dbReference type="SUPFAM" id="SSF111337">
    <property type="entry name" value="QueA-like"/>
    <property type="match status" value="1"/>
</dbReference>
<feature type="chain" id="PRO_0000165420" description="S-adenosylmethionine:tRNA ribosyltransferase-isomerase">
    <location>
        <begin position="1"/>
        <end position="363"/>
    </location>
</feature>
<evidence type="ECO:0000255" key="1">
    <source>
        <dbReference type="HAMAP-Rule" id="MF_00113"/>
    </source>
</evidence>
<gene>
    <name evidence="1" type="primary">queA</name>
    <name type="ordered locus">PM0232</name>
</gene>
<organism>
    <name type="scientific">Pasteurella multocida (strain Pm70)</name>
    <dbReference type="NCBI Taxonomy" id="272843"/>
    <lineage>
        <taxon>Bacteria</taxon>
        <taxon>Pseudomonadati</taxon>
        <taxon>Pseudomonadota</taxon>
        <taxon>Gammaproteobacteria</taxon>
        <taxon>Pasteurellales</taxon>
        <taxon>Pasteurellaceae</taxon>
        <taxon>Pasteurella</taxon>
    </lineage>
</organism>
<accession>P57832</accession>
<proteinExistence type="inferred from homology"/>
<sequence>MRVSDFYFDLPDELIARYPKPDRTASRLLQLNGENGEITHRTFADILDQIHEGDLLIFNNTRVIPARMFGRKASGGKVEVLVERILSDTRFLAHVRSSKAPKEGAELWLGEDKLGEHHGVKMIMVARHDTLFELEIAQKQTALLDVLQQIGHMPLPPYIDRPDEEADKERYQTVYNKVPGAVAAPTAGLHFDDALLAQLKAKGVNFAFVTLHVGAGTFQPVRVEQIEDHKMHAEYVEVPQEVCDAIIATKQAGKRVIAVGTTSVRSVESAALATEEKGEHALITPYFSDTSIFIYPGKTFRVVDCLITNFHLPESTLIMLVSAFAGYRHTMQAYQSAVENRYRFFSYGDAMFISKNPHVNGLD</sequence>
<reference key="1">
    <citation type="journal article" date="2001" name="Proc. Natl. Acad. Sci. U.S.A.">
        <title>Complete genomic sequence of Pasteurella multocida Pm70.</title>
        <authorList>
            <person name="May B.J."/>
            <person name="Zhang Q."/>
            <person name="Li L.L."/>
            <person name="Paustian M.L."/>
            <person name="Whittam T.S."/>
            <person name="Kapur V."/>
        </authorList>
    </citation>
    <scope>NUCLEOTIDE SEQUENCE [LARGE SCALE GENOMIC DNA]</scope>
    <source>
        <strain>Pm70</strain>
    </source>
</reference>
<protein>
    <recommendedName>
        <fullName evidence="1">S-adenosylmethionine:tRNA ribosyltransferase-isomerase</fullName>
        <ecNumber evidence="1">2.4.99.17</ecNumber>
    </recommendedName>
    <alternativeName>
        <fullName evidence="1">Queuosine biosynthesis protein QueA</fullName>
    </alternativeName>
</protein>
<comment type="function">
    <text evidence="1">Transfers and isomerizes the ribose moiety from AdoMet to the 7-aminomethyl group of 7-deazaguanine (preQ1-tRNA) to give epoxyqueuosine (oQ-tRNA).</text>
</comment>
<comment type="catalytic activity">
    <reaction evidence="1">
        <text>7-aminomethyl-7-carbaguanosine(34) in tRNA + S-adenosyl-L-methionine = epoxyqueuosine(34) in tRNA + adenine + L-methionine + 2 H(+)</text>
        <dbReference type="Rhea" id="RHEA:32155"/>
        <dbReference type="Rhea" id="RHEA-COMP:10342"/>
        <dbReference type="Rhea" id="RHEA-COMP:18582"/>
        <dbReference type="ChEBI" id="CHEBI:15378"/>
        <dbReference type="ChEBI" id="CHEBI:16708"/>
        <dbReference type="ChEBI" id="CHEBI:57844"/>
        <dbReference type="ChEBI" id="CHEBI:59789"/>
        <dbReference type="ChEBI" id="CHEBI:82833"/>
        <dbReference type="ChEBI" id="CHEBI:194443"/>
        <dbReference type="EC" id="2.4.99.17"/>
    </reaction>
</comment>
<comment type="pathway">
    <text evidence="1">tRNA modification; tRNA-queuosine biosynthesis.</text>
</comment>
<comment type="subunit">
    <text evidence="1">Monomer.</text>
</comment>
<comment type="subcellular location">
    <subcellularLocation>
        <location evidence="1">Cytoplasm</location>
    </subcellularLocation>
</comment>
<comment type="similarity">
    <text evidence="1">Belongs to the QueA family.</text>
</comment>
<keyword id="KW-0963">Cytoplasm</keyword>
<keyword id="KW-0671">Queuosine biosynthesis</keyword>
<keyword id="KW-1185">Reference proteome</keyword>
<keyword id="KW-0949">S-adenosyl-L-methionine</keyword>
<keyword id="KW-0808">Transferase</keyword>
<name>QUEA_PASMU</name>